<protein>
    <recommendedName>
        <fullName evidence="1">Putative 4-diphosphocytidyl-2-C-methyl-D-erythritol kinase</fullName>
        <shortName evidence="1">CMK</shortName>
        <ecNumber evidence="1">2.7.1.148</ecNumber>
    </recommendedName>
    <alternativeName>
        <fullName evidence="1">4-(cytidine-5'-diphospho)-2-C-methyl-D-erythritol kinase</fullName>
    </alternativeName>
</protein>
<proteinExistence type="inferred from homology"/>
<organism>
    <name type="scientific">Streptococcus agalactiae serotype III (strain NEM316)</name>
    <dbReference type="NCBI Taxonomy" id="211110"/>
    <lineage>
        <taxon>Bacteria</taxon>
        <taxon>Bacillati</taxon>
        <taxon>Bacillota</taxon>
        <taxon>Bacilli</taxon>
        <taxon>Lactobacillales</taxon>
        <taxon>Streptococcaceae</taxon>
        <taxon>Streptococcus</taxon>
    </lineage>
</organism>
<keyword id="KW-0067">ATP-binding</keyword>
<keyword id="KW-0418">Kinase</keyword>
<keyword id="KW-0547">Nucleotide-binding</keyword>
<keyword id="KW-0808">Transferase</keyword>
<dbReference type="EC" id="2.7.1.148" evidence="1"/>
<dbReference type="EMBL" id="AL766844">
    <property type="protein sequence ID" value="CAD45794.1"/>
    <property type="molecule type" value="Genomic_DNA"/>
</dbReference>
<dbReference type="SMR" id="Q8E7K5"/>
<dbReference type="KEGG" id="san:gbs0149"/>
<dbReference type="eggNOG" id="COG1947">
    <property type="taxonomic scope" value="Bacteria"/>
</dbReference>
<dbReference type="HOGENOM" id="CLU_053057_1_1_9"/>
<dbReference type="Proteomes" id="UP000000823">
    <property type="component" value="Chromosome"/>
</dbReference>
<dbReference type="GO" id="GO:0050515">
    <property type="term" value="F:4-(cytidine 5'-diphospho)-2-C-methyl-D-erythritol kinase activity"/>
    <property type="evidence" value="ECO:0007669"/>
    <property type="project" value="UniProtKB-UniRule"/>
</dbReference>
<dbReference type="GO" id="GO:0005524">
    <property type="term" value="F:ATP binding"/>
    <property type="evidence" value="ECO:0007669"/>
    <property type="project" value="UniProtKB-UniRule"/>
</dbReference>
<dbReference type="GO" id="GO:0016114">
    <property type="term" value="P:terpenoid biosynthetic process"/>
    <property type="evidence" value="ECO:0007669"/>
    <property type="project" value="InterPro"/>
</dbReference>
<dbReference type="Gene3D" id="3.30.230.10">
    <property type="match status" value="1"/>
</dbReference>
<dbReference type="Gene3D" id="3.30.70.890">
    <property type="entry name" value="GHMP kinase, C-terminal domain"/>
    <property type="match status" value="1"/>
</dbReference>
<dbReference type="HAMAP" id="MF_00061">
    <property type="entry name" value="IspE"/>
    <property type="match status" value="1"/>
</dbReference>
<dbReference type="InterPro" id="IPR013750">
    <property type="entry name" value="GHMP_kinase_C_dom"/>
</dbReference>
<dbReference type="InterPro" id="IPR036554">
    <property type="entry name" value="GHMP_kinase_C_sf"/>
</dbReference>
<dbReference type="InterPro" id="IPR006204">
    <property type="entry name" value="GHMP_kinase_N_dom"/>
</dbReference>
<dbReference type="InterPro" id="IPR004424">
    <property type="entry name" value="IspE"/>
</dbReference>
<dbReference type="InterPro" id="IPR020568">
    <property type="entry name" value="Ribosomal_Su5_D2-typ_SF"/>
</dbReference>
<dbReference type="InterPro" id="IPR014721">
    <property type="entry name" value="Ribsml_uS5_D2-typ_fold_subgr"/>
</dbReference>
<dbReference type="NCBIfam" id="TIGR00154">
    <property type="entry name" value="ispE"/>
    <property type="match status" value="1"/>
</dbReference>
<dbReference type="PANTHER" id="PTHR43527">
    <property type="entry name" value="4-DIPHOSPHOCYTIDYL-2-C-METHYL-D-ERYTHRITOL KINASE, CHLOROPLASTIC"/>
    <property type="match status" value="1"/>
</dbReference>
<dbReference type="PANTHER" id="PTHR43527:SF2">
    <property type="entry name" value="4-DIPHOSPHOCYTIDYL-2-C-METHYL-D-ERYTHRITOL KINASE, CHLOROPLASTIC"/>
    <property type="match status" value="1"/>
</dbReference>
<dbReference type="Pfam" id="PF08544">
    <property type="entry name" value="GHMP_kinases_C"/>
    <property type="match status" value="1"/>
</dbReference>
<dbReference type="Pfam" id="PF00288">
    <property type="entry name" value="GHMP_kinases_N"/>
    <property type="match status" value="1"/>
</dbReference>
<dbReference type="PIRSF" id="PIRSF010376">
    <property type="entry name" value="IspE"/>
    <property type="match status" value="1"/>
</dbReference>
<dbReference type="SUPFAM" id="SSF55060">
    <property type="entry name" value="GHMP Kinase, C-terminal domain"/>
    <property type="match status" value="1"/>
</dbReference>
<dbReference type="SUPFAM" id="SSF54211">
    <property type="entry name" value="Ribosomal protein S5 domain 2-like"/>
    <property type="match status" value="1"/>
</dbReference>
<comment type="function">
    <text evidence="1">Catalyzes the phosphorylation of the position 2 hydroxy group of 4-diphosphocytidyl-2C-methyl-D-erythritol.</text>
</comment>
<comment type="catalytic activity">
    <reaction evidence="1">
        <text>4-CDP-2-C-methyl-D-erythritol + ATP = 4-CDP-2-C-methyl-D-erythritol 2-phosphate + ADP + H(+)</text>
        <dbReference type="Rhea" id="RHEA:18437"/>
        <dbReference type="ChEBI" id="CHEBI:15378"/>
        <dbReference type="ChEBI" id="CHEBI:30616"/>
        <dbReference type="ChEBI" id="CHEBI:57823"/>
        <dbReference type="ChEBI" id="CHEBI:57919"/>
        <dbReference type="ChEBI" id="CHEBI:456216"/>
        <dbReference type="EC" id="2.7.1.148"/>
    </reaction>
</comment>
<comment type="similarity">
    <text evidence="1">Belongs to the GHMP kinase family. IspE subfamily.</text>
</comment>
<reference key="1">
    <citation type="journal article" date="2002" name="Mol. Microbiol.">
        <title>Genome sequence of Streptococcus agalactiae, a pathogen causing invasive neonatal disease.</title>
        <authorList>
            <person name="Glaser P."/>
            <person name="Rusniok C."/>
            <person name="Buchrieser C."/>
            <person name="Chevalier F."/>
            <person name="Frangeul L."/>
            <person name="Msadek T."/>
            <person name="Zouine M."/>
            <person name="Couve E."/>
            <person name="Lalioui L."/>
            <person name="Poyart C."/>
            <person name="Trieu-Cuot P."/>
            <person name="Kunst F."/>
        </authorList>
    </citation>
    <scope>NUCLEOTIDE SEQUENCE [LARGE SCALE GENOMIC DNA]</scope>
    <source>
        <strain>NEM316</strain>
    </source>
</reference>
<feature type="chain" id="PRO_0000189269" description="Putative 4-diphosphocytidyl-2-C-methyl-D-erythritol kinase">
    <location>
        <begin position="1"/>
        <end position="283"/>
    </location>
</feature>
<feature type="active site" evidence="1">
    <location>
        <position position="10"/>
    </location>
</feature>
<feature type="active site" evidence="1">
    <location>
        <position position="136"/>
    </location>
</feature>
<feature type="binding site" evidence="1">
    <location>
        <begin position="94"/>
        <end position="104"/>
    </location>
    <ligand>
        <name>ATP</name>
        <dbReference type="ChEBI" id="CHEBI:30616"/>
    </ligand>
</feature>
<evidence type="ECO:0000255" key="1">
    <source>
        <dbReference type="HAMAP-Rule" id="MF_00061"/>
    </source>
</evidence>
<name>ISPE_STRA3</name>
<gene>
    <name type="ordered locus">gbs0149</name>
</gene>
<sequence length="283" mass="31075">MRIFEKAPAKLNLGLDIKGRCDDGYHELAMIMVSIDLNDYVTISELKEDCIVIDSDSSKMPLNNDNDVFKAADIIKNQYGINKGVHIRLEKSIPVCAGLGGGSTDAAATIRALNRLWNLQMDYDEMVAIGFKIGSDVPYCLGGGCSLVLGKGEIVKPLPTLRPCWIVLVKPDFGISTKSIFRDIDCKSISRVDIDLLKSAILSSDYQLMVKSMGNSLEDITITKNPVISTIKERMLNSGADVALMTGSGPTVFSMCSTEKKADRVFNSMKGFCKEVYKVRLLR</sequence>
<accession>Q8E7K5</accession>